<evidence type="ECO:0000255" key="1">
    <source>
        <dbReference type="HAMAP-Rule" id="MF_00003"/>
    </source>
</evidence>
<evidence type="ECO:0000256" key="2">
    <source>
        <dbReference type="SAM" id="MobiDB-lite"/>
    </source>
</evidence>
<accession>Q73VV5</accession>
<feature type="chain" id="PRO_0000102693" description="Ribosome-binding factor A">
    <location>
        <begin position="1"/>
        <end position="162"/>
    </location>
</feature>
<feature type="region of interest" description="Disordered" evidence="2">
    <location>
        <begin position="124"/>
        <end position="162"/>
    </location>
</feature>
<protein>
    <recommendedName>
        <fullName evidence="1">Ribosome-binding factor A</fullName>
    </recommendedName>
</protein>
<reference key="1">
    <citation type="journal article" date="2005" name="Proc. Natl. Acad. Sci. U.S.A.">
        <title>The complete genome sequence of Mycobacterium avium subspecies paratuberculosis.</title>
        <authorList>
            <person name="Li L."/>
            <person name="Bannantine J.P."/>
            <person name="Zhang Q."/>
            <person name="Amonsin A."/>
            <person name="May B.J."/>
            <person name="Alt D."/>
            <person name="Banerji N."/>
            <person name="Kanjilal S."/>
            <person name="Kapur V."/>
        </authorList>
    </citation>
    <scope>NUCLEOTIDE SEQUENCE [LARGE SCALE GENOMIC DNA]</scope>
    <source>
        <strain>ATCC BAA-968 / K-10</strain>
    </source>
</reference>
<keyword id="KW-0963">Cytoplasm</keyword>
<keyword id="KW-1185">Reference proteome</keyword>
<keyword id="KW-0690">Ribosome biogenesis</keyword>
<sequence>MPDPARARRLAKRINTIVASAIEFEIKDPGLDGVTIVDTKVTADLHDATVFYTVMGRTLDDEPDYGAAAAALERAKGALRTMVGAGTGVRFTPTLTFTRDTTSDSVARMDELLARARAADADLARVRSGAKPAGEADPYRESGSGVEPGRDGSIGDDDQPEY</sequence>
<proteinExistence type="inferred from homology"/>
<dbReference type="EMBL" id="AE016958">
    <property type="protein sequence ID" value="AAS05223.1"/>
    <property type="molecule type" value="Genomic_DNA"/>
</dbReference>
<dbReference type="RefSeq" id="WP_003875146.1">
    <property type="nucleotide sequence ID" value="NZ_CP106873.1"/>
</dbReference>
<dbReference type="SMR" id="Q73VV5"/>
<dbReference type="STRING" id="262316.MAP_2906c"/>
<dbReference type="GeneID" id="75271085"/>
<dbReference type="KEGG" id="mpa:MAP_2906c"/>
<dbReference type="eggNOG" id="COG0858">
    <property type="taxonomic scope" value="Bacteria"/>
</dbReference>
<dbReference type="HOGENOM" id="CLU_089475_0_0_11"/>
<dbReference type="Proteomes" id="UP000000580">
    <property type="component" value="Chromosome"/>
</dbReference>
<dbReference type="GO" id="GO:0005829">
    <property type="term" value="C:cytosol"/>
    <property type="evidence" value="ECO:0007669"/>
    <property type="project" value="TreeGrafter"/>
</dbReference>
<dbReference type="GO" id="GO:0043024">
    <property type="term" value="F:ribosomal small subunit binding"/>
    <property type="evidence" value="ECO:0007669"/>
    <property type="project" value="TreeGrafter"/>
</dbReference>
<dbReference type="GO" id="GO:0030490">
    <property type="term" value="P:maturation of SSU-rRNA"/>
    <property type="evidence" value="ECO:0007669"/>
    <property type="project" value="UniProtKB-UniRule"/>
</dbReference>
<dbReference type="Gene3D" id="3.30.300.20">
    <property type="match status" value="1"/>
</dbReference>
<dbReference type="HAMAP" id="MF_00003">
    <property type="entry name" value="RbfA"/>
    <property type="match status" value="1"/>
</dbReference>
<dbReference type="InterPro" id="IPR015946">
    <property type="entry name" value="KH_dom-like_a/b"/>
</dbReference>
<dbReference type="InterPro" id="IPR000238">
    <property type="entry name" value="RbfA"/>
</dbReference>
<dbReference type="InterPro" id="IPR023799">
    <property type="entry name" value="RbfA_dom_sf"/>
</dbReference>
<dbReference type="InterPro" id="IPR020053">
    <property type="entry name" value="Ribosome-bd_factorA_CS"/>
</dbReference>
<dbReference type="NCBIfam" id="TIGR00082">
    <property type="entry name" value="rbfA"/>
    <property type="match status" value="1"/>
</dbReference>
<dbReference type="PANTHER" id="PTHR33515">
    <property type="entry name" value="RIBOSOME-BINDING FACTOR A, CHLOROPLASTIC-RELATED"/>
    <property type="match status" value="1"/>
</dbReference>
<dbReference type="PANTHER" id="PTHR33515:SF1">
    <property type="entry name" value="RIBOSOME-BINDING FACTOR A, CHLOROPLASTIC-RELATED"/>
    <property type="match status" value="1"/>
</dbReference>
<dbReference type="Pfam" id="PF02033">
    <property type="entry name" value="RBFA"/>
    <property type="match status" value="1"/>
</dbReference>
<dbReference type="SUPFAM" id="SSF89919">
    <property type="entry name" value="Ribosome-binding factor A, RbfA"/>
    <property type="match status" value="1"/>
</dbReference>
<dbReference type="PROSITE" id="PS01319">
    <property type="entry name" value="RBFA"/>
    <property type="match status" value="1"/>
</dbReference>
<comment type="function">
    <text evidence="1">One of several proteins that assist in the late maturation steps of the functional core of the 30S ribosomal subunit. Associates with free 30S ribosomal subunits (but not with 30S subunits that are part of 70S ribosomes or polysomes). Required for efficient processing of 16S rRNA. May interact with the 5'-terminal helix region of 16S rRNA.</text>
</comment>
<comment type="subunit">
    <text evidence="1">Monomer. Binds 30S ribosomal subunits, but not 50S ribosomal subunits or 70S ribosomes.</text>
</comment>
<comment type="subcellular location">
    <subcellularLocation>
        <location evidence="1">Cytoplasm</location>
    </subcellularLocation>
</comment>
<comment type="similarity">
    <text evidence="1">Belongs to the RbfA family.</text>
</comment>
<name>RBFA_MYCPA</name>
<gene>
    <name evidence="1" type="primary">rbfA</name>
    <name type="ordered locus">MAP_2906c</name>
</gene>
<organism>
    <name type="scientific">Mycolicibacterium paratuberculosis (strain ATCC BAA-968 / K-10)</name>
    <name type="common">Mycobacterium paratuberculosis</name>
    <dbReference type="NCBI Taxonomy" id="262316"/>
    <lineage>
        <taxon>Bacteria</taxon>
        <taxon>Bacillati</taxon>
        <taxon>Actinomycetota</taxon>
        <taxon>Actinomycetes</taxon>
        <taxon>Mycobacteriales</taxon>
        <taxon>Mycobacteriaceae</taxon>
        <taxon>Mycobacterium</taxon>
        <taxon>Mycobacterium avium complex (MAC)</taxon>
    </lineage>
</organism>